<evidence type="ECO:0000255" key="1">
    <source>
        <dbReference type="HAMAP-Rule" id="MF_00418"/>
    </source>
</evidence>
<evidence type="ECO:0000305" key="2"/>
<dbReference type="EC" id="4.3.3.7" evidence="1"/>
<dbReference type="EMBL" id="CU928160">
    <property type="protein sequence ID" value="CAQ99369.1"/>
    <property type="molecule type" value="Genomic_DNA"/>
</dbReference>
<dbReference type="RefSeq" id="WP_001311023.1">
    <property type="nucleotide sequence ID" value="NC_011741.1"/>
</dbReference>
<dbReference type="SMR" id="B7M7I1"/>
<dbReference type="KEGG" id="ecr:ECIAI1_2529"/>
<dbReference type="HOGENOM" id="CLU_049343_7_1_6"/>
<dbReference type="UniPathway" id="UPA00034">
    <property type="reaction ID" value="UER00017"/>
</dbReference>
<dbReference type="GO" id="GO:0005829">
    <property type="term" value="C:cytosol"/>
    <property type="evidence" value="ECO:0007669"/>
    <property type="project" value="TreeGrafter"/>
</dbReference>
<dbReference type="GO" id="GO:0008840">
    <property type="term" value="F:4-hydroxy-tetrahydrodipicolinate synthase activity"/>
    <property type="evidence" value="ECO:0007669"/>
    <property type="project" value="UniProtKB-UniRule"/>
</dbReference>
<dbReference type="GO" id="GO:0019877">
    <property type="term" value="P:diaminopimelate biosynthetic process"/>
    <property type="evidence" value="ECO:0007669"/>
    <property type="project" value="UniProtKB-UniRule"/>
</dbReference>
<dbReference type="GO" id="GO:0009089">
    <property type="term" value="P:lysine biosynthetic process via diaminopimelate"/>
    <property type="evidence" value="ECO:0007669"/>
    <property type="project" value="UniProtKB-UniRule"/>
</dbReference>
<dbReference type="CDD" id="cd00950">
    <property type="entry name" value="DHDPS"/>
    <property type="match status" value="1"/>
</dbReference>
<dbReference type="FunFam" id="3.20.20.70:FF:000046">
    <property type="entry name" value="4-hydroxy-tetrahydrodipicolinate synthase"/>
    <property type="match status" value="1"/>
</dbReference>
<dbReference type="Gene3D" id="3.20.20.70">
    <property type="entry name" value="Aldolase class I"/>
    <property type="match status" value="1"/>
</dbReference>
<dbReference type="HAMAP" id="MF_00418">
    <property type="entry name" value="DapA"/>
    <property type="match status" value="1"/>
</dbReference>
<dbReference type="InterPro" id="IPR013785">
    <property type="entry name" value="Aldolase_TIM"/>
</dbReference>
<dbReference type="InterPro" id="IPR005263">
    <property type="entry name" value="DapA"/>
</dbReference>
<dbReference type="InterPro" id="IPR002220">
    <property type="entry name" value="DapA-like"/>
</dbReference>
<dbReference type="InterPro" id="IPR020625">
    <property type="entry name" value="Schiff_base-form_aldolases_AS"/>
</dbReference>
<dbReference type="InterPro" id="IPR020624">
    <property type="entry name" value="Schiff_base-form_aldolases_CS"/>
</dbReference>
<dbReference type="NCBIfam" id="TIGR00674">
    <property type="entry name" value="dapA"/>
    <property type="match status" value="1"/>
</dbReference>
<dbReference type="PANTHER" id="PTHR12128:SF66">
    <property type="entry name" value="4-HYDROXY-2-OXOGLUTARATE ALDOLASE, MITOCHONDRIAL"/>
    <property type="match status" value="1"/>
</dbReference>
<dbReference type="PANTHER" id="PTHR12128">
    <property type="entry name" value="DIHYDRODIPICOLINATE SYNTHASE"/>
    <property type="match status" value="1"/>
</dbReference>
<dbReference type="Pfam" id="PF00701">
    <property type="entry name" value="DHDPS"/>
    <property type="match status" value="1"/>
</dbReference>
<dbReference type="PIRSF" id="PIRSF001365">
    <property type="entry name" value="DHDPS"/>
    <property type="match status" value="1"/>
</dbReference>
<dbReference type="PRINTS" id="PR00146">
    <property type="entry name" value="DHPICSNTHASE"/>
</dbReference>
<dbReference type="SMART" id="SM01130">
    <property type="entry name" value="DHDPS"/>
    <property type="match status" value="1"/>
</dbReference>
<dbReference type="SUPFAM" id="SSF51569">
    <property type="entry name" value="Aldolase"/>
    <property type="match status" value="1"/>
</dbReference>
<dbReference type="PROSITE" id="PS00665">
    <property type="entry name" value="DHDPS_1"/>
    <property type="match status" value="1"/>
</dbReference>
<dbReference type="PROSITE" id="PS00666">
    <property type="entry name" value="DHDPS_2"/>
    <property type="match status" value="1"/>
</dbReference>
<reference key="1">
    <citation type="journal article" date="2009" name="PLoS Genet.">
        <title>Organised genome dynamics in the Escherichia coli species results in highly diverse adaptive paths.</title>
        <authorList>
            <person name="Touchon M."/>
            <person name="Hoede C."/>
            <person name="Tenaillon O."/>
            <person name="Barbe V."/>
            <person name="Baeriswyl S."/>
            <person name="Bidet P."/>
            <person name="Bingen E."/>
            <person name="Bonacorsi S."/>
            <person name="Bouchier C."/>
            <person name="Bouvet O."/>
            <person name="Calteau A."/>
            <person name="Chiapello H."/>
            <person name="Clermont O."/>
            <person name="Cruveiller S."/>
            <person name="Danchin A."/>
            <person name="Diard M."/>
            <person name="Dossat C."/>
            <person name="Karoui M.E."/>
            <person name="Frapy E."/>
            <person name="Garry L."/>
            <person name="Ghigo J.M."/>
            <person name="Gilles A.M."/>
            <person name="Johnson J."/>
            <person name="Le Bouguenec C."/>
            <person name="Lescat M."/>
            <person name="Mangenot S."/>
            <person name="Martinez-Jehanne V."/>
            <person name="Matic I."/>
            <person name="Nassif X."/>
            <person name="Oztas S."/>
            <person name="Petit M.A."/>
            <person name="Pichon C."/>
            <person name="Rouy Z."/>
            <person name="Ruf C.S."/>
            <person name="Schneider D."/>
            <person name="Tourret J."/>
            <person name="Vacherie B."/>
            <person name="Vallenet D."/>
            <person name="Medigue C."/>
            <person name="Rocha E.P.C."/>
            <person name="Denamur E."/>
        </authorList>
    </citation>
    <scope>NUCLEOTIDE SEQUENCE [LARGE SCALE GENOMIC DNA]</scope>
    <source>
        <strain>IAI1</strain>
    </source>
</reference>
<name>DAPA_ECO8A</name>
<comment type="function">
    <text evidence="1">Catalyzes the condensation of (S)-aspartate-beta-semialdehyde [(S)-ASA] and pyruvate to 4-hydroxy-tetrahydrodipicolinate (HTPA).</text>
</comment>
<comment type="catalytic activity">
    <reaction evidence="1">
        <text>L-aspartate 4-semialdehyde + pyruvate = (2S,4S)-4-hydroxy-2,3,4,5-tetrahydrodipicolinate + H2O + H(+)</text>
        <dbReference type="Rhea" id="RHEA:34171"/>
        <dbReference type="ChEBI" id="CHEBI:15361"/>
        <dbReference type="ChEBI" id="CHEBI:15377"/>
        <dbReference type="ChEBI" id="CHEBI:15378"/>
        <dbReference type="ChEBI" id="CHEBI:67139"/>
        <dbReference type="ChEBI" id="CHEBI:537519"/>
        <dbReference type="EC" id="4.3.3.7"/>
    </reaction>
</comment>
<comment type="pathway">
    <text evidence="1">Amino-acid biosynthesis; L-lysine biosynthesis via DAP pathway; (S)-tetrahydrodipicolinate from L-aspartate: step 3/4.</text>
</comment>
<comment type="subunit">
    <text evidence="1">Homotetramer; dimer of dimers.</text>
</comment>
<comment type="subcellular location">
    <subcellularLocation>
        <location evidence="1">Cytoplasm</location>
    </subcellularLocation>
</comment>
<comment type="similarity">
    <text evidence="1">Belongs to the DapA family.</text>
</comment>
<comment type="caution">
    <text evidence="2">Was originally thought to be a dihydrodipicolinate synthase (DHDPS), catalyzing the condensation of (S)-aspartate-beta-semialdehyde [(S)-ASA] and pyruvate to dihydrodipicolinate (DHDP). However, it was shown in E.coli that the product of the enzymatic reaction is not dihydrodipicolinate but in fact (4S)-4-hydroxy-2,3,4,5-tetrahydro-(2S)-dipicolinic acid (HTPA), and that the consecutive dehydration reaction leading to DHDP is not spontaneous but catalyzed by DapB.</text>
</comment>
<feature type="chain" id="PRO_1000124030" description="4-hydroxy-tetrahydrodipicolinate synthase">
    <location>
        <begin position="1"/>
        <end position="292"/>
    </location>
</feature>
<feature type="active site" description="Proton donor/acceptor" evidence="1">
    <location>
        <position position="133"/>
    </location>
</feature>
<feature type="active site" description="Schiff-base intermediate with substrate" evidence="1">
    <location>
        <position position="161"/>
    </location>
</feature>
<feature type="binding site" evidence="1">
    <location>
        <position position="45"/>
    </location>
    <ligand>
        <name>pyruvate</name>
        <dbReference type="ChEBI" id="CHEBI:15361"/>
    </ligand>
</feature>
<feature type="binding site" evidence="1">
    <location>
        <position position="203"/>
    </location>
    <ligand>
        <name>pyruvate</name>
        <dbReference type="ChEBI" id="CHEBI:15361"/>
    </ligand>
</feature>
<feature type="site" description="Part of a proton relay during catalysis" evidence="1">
    <location>
        <position position="44"/>
    </location>
</feature>
<feature type="site" description="Part of a proton relay during catalysis" evidence="1">
    <location>
        <position position="107"/>
    </location>
</feature>
<proteinExistence type="inferred from homology"/>
<gene>
    <name evidence="1" type="primary">dapA</name>
    <name type="ordered locus">ECIAI1_2529</name>
</gene>
<protein>
    <recommendedName>
        <fullName evidence="1">4-hydroxy-tetrahydrodipicolinate synthase</fullName>
        <shortName evidence="1">HTPA synthase</shortName>
        <ecNumber evidence="1">4.3.3.7</ecNumber>
    </recommendedName>
</protein>
<organism>
    <name type="scientific">Escherichia coli O8 (strain IAI1)</name>
    <dbReference type="NCBI Taxonomy" id="585034"/>
    <lineage>
        <taxon>Bacteria</taxon>
        <taxon>Pseudomonadati</taxon>
        <taxon>Pseudomonadota</taxon>
        <taxon>Gammaproteobacteria</taxon>
        <taxon>Enterobacterales</taxon>
        <taxon>Enterobacteriaceae</taxon>
        <taxon>Escherichia</taxon>
    </lineage>
</organism>
<keyword id="KW-0028">Amino-acid biosynthesis</keyword>
<keyword id="KW-0963">Cytoplasm</keyword>
<keyword id="KW-0220">Diaminopimelate biosynthesis</keyword>
<keyword id="KW-0456">Lyase</keyword>
<keyword id="KW-0457">Lysine biosynthesis</keyword>
<keyword id="KW-0704">Schiff base</keyword>
<accession>B7M7I1</accession>
<sequence>MFTGSIVAIVTPMDEKGNVCRASLKKLIDYHVASGTSAIVSVGTTGESATLNHDEHADVVMMTLDLADGRIPVIAGTGANATAEAISLTQRFNDSGIVGCLTVTPYYNRPSQEGLYQHFKAIAEHTDLPQILYNVPSRTGCDLLPETVGRLAKVKNIIGIKEATGNLTRVNQIKELVSDDFVLLSGDDASALDFMQLGGHGVISVTANVAARDMAQMCKLAAEGHFAEARVINQRLMPLHNKLFVEPNPIPVKWACKELGLVATDTLRLPMTPITDSGRETVRAALKHAGLL</sequence>